<proteinExistence type="inferred from homology"/>
<keyword id="KW-0067">ATP-binding</keyword>
<keyword id="KW-0436">Ligase</keyword>
<keyword id="KW-0547">Nucleotide-binding</keyword>
<keyword id="KW-0648">Protein biosynthesis</keyword>
<accession>A1TIW2</accession>
<organism>
    <name type="scientific">Paracidovorax citrulli (strain AAC00-1)</name>
    <name type="common">Acidovorax citrulli</name>
    <dbReference type="NCBI Taxonomy" id="397945"/>
    <lineage>
        <taxon>Bacteria</taxon>
        <taxon>Pseudomonadati</taxon>
        <taxon>Pseudomonadota</taxon>
        <taxon>Betaproteobacteria</taxon>
        <taxon>Burkholderiales</taxon>
        <taxon>Comamonadaceae</taxon>
        <taxon>Paracidovorax</taxon>
    </lineage>
</organism>
<protein>
    <recommendedName>
        <fullName evidence="1">Aspartyl/glutamyl-tRNA(Asn/Gln) amidotransferase subunit C</fullName>
        <shortName evidence="1">Asp/Glu-ADT subunit C</shortName>
        <ecNumber evidence="1">6.3.5.-</ecNumber>
    </recommendedName>
</protein>
<dbReference type="EC" id="6.3.5.-" evidence="1"/>
<dbReference type="EMBL" id="CP000512">
    <property type="protein sequence ID" value="ABM30900.1"/>
    <property type="molecule type" value="Genomic_DNA"/>
</dbReference>
<dbReference type="RefSeq" id="WP_011793478.1">
    <property type="nucleotide sequence ID" value="NC_008752.1"/>
</dbReference>
<dbReference type="SMR" id="A1TIW2"/>
<dbReference type="STRING" id="397945.Aave_0293"/>
<dbReference type="GeneID" id="79790097"/>
<dbReference type="KEGG" id="aav:Aave_0293"/>
<dbReference type="eggNOG" id="COG0721">
    <property type="taxonomic scope" value="Bacteria"/>
</dbReference>
<dbReference type="HOGENOM" id="CLU_105899_2_2_4"/>
<dbReference type="OrthoDB" id="9794326at2"/>
<dbReference type="Proteomes" id="UP000002596">
    <property type="component" value="Chromosome"/>
</dbReference>
<dbReference type="GO" id="GO:0050566">
    <property type="term" value="F:asparaginyl-tRNA synthase (glutamine-hydrolyzing) activity"/>
    <property type="evidence" value="ECO:0007669"/>
    <property type="project" value="RHEA"/>
</dbReference>
<dbReference type="GO" id="GO:0005524">
    <property type="term" value="F:ATP binding"/>
    <property type="evidence" value="ECO:0007669"/>
    <property type="project" value="UniProtKB-KW"/>
</dbReference>
<dbReference type="GO" id="GO:0050567">
    <property type="term" value="F:glutaminyl-tRNA synthase (glutamine-hydrolyzing) activity"/>
    <property type="evidence" value="ECO:0007669"/>
    <property type="project" value="UniProtKB-UniRule"/>
</dbReference>
<dbReference type="GO" id="GO:0070681">
    <property type="term" value="P:glutaminyl-tRNAGln biosynthesis via transamidation"/>
    <property type="evidence" value="ECO:0007669"/>
    <property type="project" value="TreeGrafter"/>
</dbReference>
<dbReference type="GO" id="GO:0006450">
    <property type="term" value="P:regulation of translational fidelity"/>
    <property type="evidence" value="ECO:0007669"/>
    <property type="project" value="InterPro"/>
</dbReference>
<dbReference type="GO" id="GO:0006412">
    <property type="term" value="P:translation"/>
    <property type="evidence" value="ECO:0007669"/>
    <property type="project" value="UniProtKB-UniRule"/>
</dbReference>
<dbReference type="Gene3D" id="1.10.20.60">
    <property type="entry name" value="Glu-tRNAGln amidotransferase C subunit, N-terminal domain"/>
    <property type="match status" value="1"/>
</dbReference>
<dbReference type="HAMAP" id="MF_00122">
    <property type="entry name" value="GatC"/>
    <property type="match status" value="1"/>
</dbReference>
<dbReference type="InterPro" id="IPR036113">
    <property type="entry name" value="Asp/Glu-ADT_sf_sub_c"/>
</dbReference>
<dbReference type="InterPro" id="IPR003837">
    <property type="entry name" value="GatC"/>
</dbReference>
<dbReference type="NCBIfam" id="TIGR00135">
    <property type="entry name" value="gatC"/>
    <property type="match status" value="1"/>
</dbReference>
<dbReference type="PANTHER" id="PTHR15004">
    <property type="entry name" value="GLUTAMYL-TRNA(GLN) AMIDOTRANSFERASE SUBUNIT C, MITOCHONDRIAL"/>
    <property type="match status" value="1"/>
</dbReference>
<dbReference type="PANTHER" id="PTHR15004:SF0">
    <property type="entry name" value="GLUTAMYL-TRNA(GLN) AMIDOTRANSFERASE SUBUNIT C, MITOCHONDRIAL"/>
    <property type="match status" value="1"/>
</dbReference>
<dbReference type="Pfam" id="PF02686">
    <property type="entry name" value="GatC"/>
    <property type="match status" value="1"/>
</dbReference>
<dbReference type="SUPFAM" id="SSF141000">
    <property type="entry name" value="Glu-tRNAGln amidotransferase C subunit"/>
    <property type="match status" value="1"/>
</dbReference>
<feature type="chain" id="PRO_1000016057" description="Aspartyl/glutamyl-tRNA(Asn/Gln) amidotransferase subunit C">
    <location>
        <begin position="1"/>
        <end position="99"/>
    </location>
</feature>
<reference key="1">
    <citation type="submission" date="2006-12" db="EMBL/GenBank/DDBJ databases">
        <title>Complete sequence of Acidovorax avenae subsp. citrulli AAC00-1.</title>
        <authorList>
            <person name="Copeland A."/>
            <person name="Lucas S."/>
            <person name="Lapidus A."/>
            <person name="Barry K."/>
            <person name="Detter J.C."/>
            <person name="Glavina del Rio T."/>
            <person name="Dalin E."/>
            <person name="Tice H."/>
            <person name="Pitluck S."/>
            <person name="Kiss H."/>
            <person name="Brettin T."/>
            <person name="Bruce D."/>
            <person name="Han C."/>
            <person name="Tapia R."/>
            <person name="Gilna P."/>
            <person name="Schmutz J."/>
            <person name="Larimer F."/>
            <person name="Land M."/>
            <person name="Hauser L."/>
            <person name="Kyrpides N."/>
            <person name="Kim E."/>
            <person name="Stahl D."/>
            <person name="Richardson P."/>
        </authorList>
    </citation>
    <scope>NUCLEOTIDE SEQUENCE [LARGE SCALE GENOMIC DNA]</scope>
    <source>
        <strain>AAC00-1</strain>
    </source>
</reference>
<gene>
    <name evidence="1" type="primary">gatC</name>
    <name type="ordered locus">Aave_0293</name>
</gene>
<sequence length="99" mass="10862">MALTPQDIGRIANLARLELSPAESERMLTQLNGFFGIVEKMRAVDTAGLEPLSHPVAAIQDIALRLREDTASEPDQREANQRSAPAVERGLFLVPKVIE</sequence>
<evidence type="ECO:0000255" key="1">
    <source>
        <dbReference type="HAMAP-Rule" id="MF_00122"/>
    </source>
</evidence>
<name>GATC_PARC0</name>
<comment type="function">
    <text evidence="1">Allows the formation of correctly charged Asn-tRNA(Asn) or Gln-tRNA(Gln) through the transamidation of misacylated Asp-tRNA(Asn) or Glu-tRNA(Gln) in organisms which lack either or both of asparaginyl-tRNA or glutaminyl-tRNA synthetases. The reaction takes place in the presence of glutamine and ATP through an activated phospho-Asp-tRNA(Asn) or phospho-Glu-tRNA(Gln).</text>
</comment>
<comment type="catalytic activity">
    <reaction evidence="1">
        <text>L-glutamyl-tRNA(Gln) + L-glutamine + ATP + H2O = L-glutaminyl-tRNA(Gln) + L-glutamate + ADP + phosphate + H(+)</text>
        <dbReference type="Rhea" id="RHEA:17521"/>
        <dbReference type="Rhea" id="RHEA-COMP:9681"/>
        <dbReference type="Rhea" id="RHEA-COMP:9684"/>
        <dbReference type="ChEBI" id="CHEBI:15377"/>
        <dbReference type="ChEBI" id="CHEBI:15378"/>
        <dbReference type="ChEBI" id="CHEBI:29985"/>
        <dbReference type="ChEBI" id="CHEBI:30616"/>
        <dbReference type="ChEBI" id="CHEBI:43474"/>
        <dbReference type="ChEBI" id="CHEBI:58359"/>
        <dbReference type="ChEBI" id="CHEBI:78520"/>
        <dbReference type="ChEBI" id="CHEBI:78521"/>
        <dbReference type="ChEBI" id="CHEBI:456216"/>
    </reaction>
</comment>
<comment type="catalytic activity">
    <reaction evidence="1">
        <text>L-aspartyl-tRNA(Asn) + L-glutamine + ATP + H2O = L-asparaginyl-tRNA(Asn) + L-glutamate + ADP + phosphate + 2 H(+)</text>
        <dbReference type="Rhea" id="RHEA:14513"/>
        <dbReference type="Rhea" id="RHEA-COMP:9674"/>
        <dbReference type="Rhea" id="RHEA-COMP:9677"/>
        <dbReference type="ChEBI" id="CHEBI:15377"/>
        <dbReference type="ChEBI" id="CHEBI:15378"/>
        <dbReference type="ChEBI" id="CHEBI:29985"/>
        <dbReference type="ChEBI" id="CHEBI:30616"/>
        <dbReference type="ChEBI" id="CHEBI:43474"/>
        <dbReference type="ChEBI" id="CHEBI:58359"/>
        <dbReference type="ChEBI" id="CHEBI:78515"/>
        <dbReference type="ChEBI" id="CHEBI:78516"/>
        <dbReference type="ChEBI" id="CHEBI:456216"/>
    </reaction>
</comment>
<comment type="subunit">
    <text evidence="1">Heterotrimer of A, B and C subunits.</text>
</comment>
<comment type="similarity">
    <text evidence="1">Belongs to the GatC family.</text>
</comment>